<accession>A0R4S9</accession>
<accession>I7GFW5</accession>
<proteinExistence type="evidence at protein level"/>
<keyword id="KW-0274">FAD</keyword>
<keyword id="KW-0285">Flavoprotein</keyword>
<keyword id="KW-0442">Lipid degradation</keyword>
<keyword id="KW-0443">Lipid metabolism</keyword>
<keyword id="KW-0560">Oxidoreductase</keyword>
<keyword id="KW-1185">Reference proteome</keyword>
<keyword id="KW-0753">Steroid metabolism</keyword>
<sequence length="569" mass="61453">MFYMTGQEYDVVVVGSGAAGMVAALTAAHQGLSTVVVEKAPHYGGSTARSGGGVWIPNNEILKRDGVKDTPDEARKYLHAIIGDVVPAEKIDTYLDRGPEMLSFVLKHSPLKLCWVPGYSDYYPETPGGKPTGRSVEPKPFDANKLGPDLKGLEPPYGKVPMNMVVMQQDYVRLNQLKRHPRGVLRSLKVGIRATWGKVSGKNLVGMGRALIAPLRIGLREAGVPVLLNTALTDLYVEDGRVLGIYVRDTTAGDDAEPRLIRARHGVILGSGGFEHNEQMRVKYQRAPITTEWTVGAVANTGDGIVAAEKLGAALELMEDAWWGPTVPLVGAPWFALSERNSPGSIIVNMSGKRFMNESMPYVEACHHMYGGQYGQGPGPGENIPAWLIFDQQYRDRYIFAGLQPGQRIPSKWLESGVIVKADTLVELAEKTGLPADQFTSTIERFNGFARSGVDEDFHRGESAYDRYYGDPTNKPNPNLGEIKHGPFYAAKMVPGDLGTKGGIRTDVRGRALRDDDSVIEGLYAAGNVSSPVMGHTYPGPGGTIGPAMTFGYLAALDIAATAAASRKG</sequence>
<protein>
    <recommendedName>
        <fullName>3-oxosteroid 1-dehydrogenase</fullName>
        <ecNumber>1.3.99.4</ecNumber>
    </recommendedName>
    <alternativeName>
        <fullName>3-keto-Delta(4)-steroid Delta(1)-dehydrogenase</fullName>
        <shortName>KSDD</shortName>
    </alternativeName>
    <alternativeName>
        <fullName>3-oxo-Delta(4)-steroid 1-dehydrogenase</fullName>
        <shortName>KSTD</shortName>
    </alternativeName>
</protein>
<comment type="function">
    <text evidence="3">Catalyzes the elimination of the C-1 and C-2 hydrogen atoms of the A-ring from the polycyclic ring structure of 3-ketosteroids. Is also involved in the formation of 1,4-androstadiene-3,17-dione (ADD) from 4-androstene-3,17-dione (AD) to.</text>
</comment>
<comment type="catalytic activity">
    <reaction evidence="3">
        <text>a 3-oxosteroid + A = a 3-oxo-Delta(1)-steroid + AH2</text>
        <dbReference type="Rhea" id="RHEA:13329"/>
        <dbReference type="ChEBI" id="CHEBI:13193"/>
        <dbReference type="ChEBI" id="CHEBI:17499"/>
        <dbReference type="ChEBI" id="CHEBI:20156"/>
        <dbReference type="ChEBI" id="CHEBI:47788"/>
        <dbReference type="EC" id="1.3.99.4"/>
    </reaction>
</comment>
<comment type="catalytic activity">
    <reaction evidence="3">
        <text>a 3-oxo-Delta(4)-steroid + A = a 3-oxo-Delta(1,4)-steroid + AH2</text>
        <dbReference type="Rhea" id="RHEA:53132"/>
        <dbReference type="ChEBI" id="CHEBI:13193"/>
        <dbReference type="ChEBI" id="CHEBI:17499"/>
        <dbReference type="ChEBI" id="CHEBI:47909"/>
        <dbReference type="ChEBI" id="CHEBI:77166"/>
    </reaction>
</comment>
<comment type="cofactor">
    <cofactor evidence="1">
        <name>FAD</name>
        <dbReference type="ChEBI" id="CHEBI:57692"/>
    </cofactor>
</comment>
<comment type="disruption phenotype">
    <text evidence="3">Cells show an accumulation of 4-androstene-3,17-dione (AD) in the cholesterol degradation process.</text>
</comment>
<comment type="similarity">
    <text evidence="4">Belongs to the FAD-dependent oxidoreductase 2 family. 3-oxosteroid dehydrogenase subfamily.</text>
</comment>
<organism>
    <name type="scientific">Mycolicibacterium smegmatis (strain ATCC 700084 / mc(2)155)</name>
    <name type="common">Mycobacterium smegmatis</name>
    <dbReference type="NCBI Taxonomy" id="246196"/>
    <lineage>
        <taxon>Bacteria</taxon>
        <taxon>Bacillati</taxon>
        <taxon>Actinomycetota</taxon>
        <taxon>Actinomycetes</taxon>
        <taxon>Mycobacteriales</taxon>
        <taxon>Mycobacteriaceae</taxon>
        <taxon>Mycolicibacterium</taxon>
    </lineage>
</organism>
<name>3O1D_MYCS2</name>
<feature type="chain" id="PRO_0000403951" description="3-oxosteroid 1-dehydrogenase">
    <location>
        <begin position="1"/>
        <end position="569"/>
    </location>
</feature>
<feature type="region of interest" description="Disordered" evidence="2">
    <location>
        <begin position="127"/>
        <end position="148"/>
    </location>
</feature>
<feature type="binding site" evidence="1">
    <location>
        <begin position="10"/>
        <end position="39"/>
    </location>
    <ligand>
        <name>FAD</name>
        <dbReference type="ChEBI" id="CHEBI:57692"/>
    </ligand>
</feature>
<dbReference type="EC" id="1.3.99.4"/>
<dbReference type="EMBL" id="CP000480">
    <property type="protein sequence ID" value="ABK75912.1"/>
    <property type="molecule type" value="Genomic_DNA"/>
</dbReference>
<dbReference type="EMBL" id="CP001663">
    <property type="protein sequence ID" value="AFP42214.1"/>
    <property type="molecule type" value="Genomic_DNA"/>
</dbReference>
<dbReference type="RefSeq" id="YP_890167.2">
    <property type="nucleotide sequence ID" value="NC_008596.1"/>
</dbReference>
<dbReference type="SMR" id="A0R4S9"/>
<dbReference type="STRING" id="246196.MSMEG_5941"/>
<dbReference type="PaxDb" id="246196-MSMEI_5781"/>
<dbReference type="KEGG" id="msg:MSMEI_5781"/>
<dbReference type="KEGG" id="msm:MSMEG_5941"/>
<dbReference type="PATRIC" id="fig|246196.19.peg.5780"/>
<dbReference type="eggNOG" id="COG1053">
    <property type="taxonomic scope" value="Bacteria"/>
</dbReference>
<dbReference type="OrthoDB" id="353581at2"/>
<dbReference type="Proteomes" id="UP000000757">
    <property type="component" value="Chromosome"/>
</dbReference>
<dbReference type="Proteomes" id="UP000006158">
    <property type="component" value="Chromosome"/>
</dbReference>
<dbReference type="GO" id="GO:0047571">
    <property type="term" value="F:3-oxosteroid 1-dehydrogenase activity"/>
    <property type="evidence" value="ECO:0007669"/>
    <property type="project" value="UniProtKB-EC"/>
</dbReference>
<dbReference type="GO" id="GO:0033765">
    <property type="term" value="F:steroid dehydrogenase activity, acting on the CH-CH group of donors"/>
    <property type="evidence" value="ECO:0000314"/>
    <property type="project" value="UniProtKB"/>
</dbReference>
<dbReference type="GO" id="GO:0016042">
    <property type="term" value="P:lipid catabolic process"/>
    <property type="evidence" value="ECO:0007669"/>
    <property type="project" value="UniProtKB-KW"/>
</dbReference>
<dbReference type="GO" id="GO:0006694">
    <property type="term" value="P:steroid biosynthetic process"/>
    <property type="evidence" value="ECO:0000314"/>
    <property type="project" value="UniProtKB"/>
</dbReference>
<dbReference type="FunFam" id="3.50.50.60:FF:000208">
    <property type="entry name" value="3-ketosteroid dehydrogenase"/>
    <property type="match status" value="1"/>
</dbReference>
<dbReference type="FunFam" id="3.50.50.60:FF:000130">
    <property type="entry name" value="3-oxosteroid 1-dehydrogenase"/>
    <property type="match status" value="1"/>
</dbReference>
<dbReference type="Gene3D" id="3.50.50.60">
    <property type="entry name" value="FAD/NAD(P)-binding domain"/>
    <property type="match status" value="2"/>
</dbReference>
<dbReference type="InterPro" id="IPR003953">
    <property type="entry name" value="FAD-dep_OxRdtase_2_FAD-bd"/>
</dbReference>
<dbReference type="InterPro" id="IPR050315">
    <property type="entry name" value="FAD-oxidoreductase_2"/>
</dbReference>
<dbReference type="InterPro" id="IPR036188">
    <property type="entry name" value="FAD/NAD-bd_sf"/>
</dbReference>
<dbReference type="InterPro" id="IPR027477">
    <property type="entry name" value="Succ_DH/fumarate_Rdtase_cat_sf"/>
</dbReference>
<dbReference type="NCBIfam" id="NF005882">
    <property type="entry name" value="PRK07843.1"/>
    <property type="match status" value="1"/>
</dbReference>
<dbReference type="PANTHER" id="PTHR43400:SF10">
    <property type="entry name" value="3-OXOSTEROID 1-DEHYDROGENASE"/>
    <property type="match status" value="1"/>
</dbReference>
<dbReference type="PANTHER" id="PTHR43400">
    <property type="entry name" value="FUMARATE REDUCTASE"/>
    <property type="match status" value="1"/>
</dbReference>
<dbReference type="Pfam" id="PF00890">
    <property type="entry name" value="FAD_binding_2"/>
    <property type="match status" value="1"/>
</dbReference>
<dbReference type="PRINTS" id="PR00469">
    <property type="entry name" value="PNDRDTASEII"/>
</dbReference>
<dbReference type="SUPFAM" id="SSF51905">
    <property type="entry name" value="FAD/NAD(P)-binding domain"/>
    <property type="match status" value="1"/>
</dbReference>
<dbReference type="SUPFAM" id="SSF56425">
    <property type="entry name" value="Succinate dehydrogenase/fumarate reductase flavoprotein, catalytic domain"/>
    <property type="match status" value="1"/>
</dbReference>
<reference key="1">
    <citation type="submission" date="2006-10" db="EMBL/GenBank/DDBJ databases">
        <authorList>
            <person name="Fleischmann R.D."/>
            <person name="Dodson R.J."/>
            <person name="Haft D.H."/>
            <person name="Merkel J.S."/>
            <person name="Nelson W.C."/>
            <person name="Fraser C.M."/>
        </authorList>
    </citation>
    <scope>NUCLEOTIDE SEQUENCE [LARGE SCALE GENOMIC DNA]</scope>
    <source>
        <strain>ATCC 700084 / mc(2)155</strain>
    </source>
</reference>
<reference key="2">
    <citation type="journal article" date="2007" name="Genome Biol.">
        <title>Interrupted coding sequences in Mycobacterium smegmatis: authentic mutations or sequencing errors?</title>
        <authorList>
            <person name="Deshayes C."/>
            <person name="Perrodou E."/>
            <person name="Gallien S."/>
            <person name="Euphrasie D."/>
            <person name="Schaeffer C."/>
            <person name="Van-Dorsselaer A."/>
            <person name="Poch O."/>
            <person name="Lecompte O."/>
            <person name="Reyrat J.-M."/>
        </authorList>
    </citation>
    <scope>NUCLEOTIDE SEQUENCE [LARGE SCALE GENOMIC DNA]</scope>
    <source>
        <strain>ATCC 700084 / mc(2)155</strain>
    </source>
</reference>
<reference key="3">
    <citation type="journal article" date="2009" name="Genome Res.">
        <title>Ortho-proteogenomics: multiple proteomes investigation through orthology and a new MS-based protocol.</title>
        <authorList>
            <person name="Gallien S."/>
            <person name="Perrodou E."/>
            <person name="Carapito C."/>
            <person name="Deshayes C."/>
            <person name="Reyrat J.-M."/>
            <person name="Van Dorsselaer A."/>
            <person name="Poch O."/>
            <person name="Schaeffer C."/>
            <person name="Lecompte O."/>
        </authorList>
    </citation>
    <scope>NUCLEOTIDE SEQUENCE [LARGE SCALE GENOMIC DNA]</scope>
    <source>
        <strain>ATCC 700084 / mc(2)155</strain>
    </source>
</reference>
<reference key="4">
    <citation type="journal article" date="2005" name="Microbiology">
        <title>Identification and targeted disruption of the gene encoding the main 3-ketosteroid dehydrogenase in Mycobacterium smegmatis.</title>
        <authorList>
            <person name="Brzostek A."/>
            <person name="Sliwinski T."/>
            <person name="Rumijowska-Galewicz A."/>
            <person name="Korycka-Machala M."/>
            <person name="Dziadek J."/>
        </authorList>
    </citation>
    <scope>FUNCTION AS A KETOSTEROID DEHYDROGENASE</scope>
    <scope>CATALYTIC ACTIVITY</scope>
    <scope>DISRUPTION PHENOTYPE</scope>
</reference>
<gene>
    <name type="primary">ksdD</name>
    <name type="ordered locus">MSMEG_5941</name>
    <name type="ordered locus">MSMEI_5781</name>
</gene>
<evidence type="ECO:0000250" key="1"/>
<evidence type="ECO:0000256" key="2">
    <source>
        <dbReference type="SAM" id="MobiDB-lite"/>
    </source>
</evidence>
<evidence type="ECO:0000269" key="3">
    <source>
    </source>
</evidence>
<evidence type="ECO:0000305" key="4"/>